<proteinExistence type="evidence at protein level"/>
<dbReference type="EMBL" id="AY299407">
    <property type="protein sequence ID" value="AAP57259.1"/>
    <property type="molecule type" value="mRNA"/>
</dbReference>
<dbReference type="EMBL" id="AK096833">
    <property type="protein sequence ID" value="BAC04872.1"/>
    <property type="molecule type" value="mRNA"/>
</dbReference>
<dbReference type="EMBL" id="BC012458">
    <property type="protein sequence ID" value="AAH12458.1"/>
    <property type="molecule type" value="mRNA"/>
</dbReference>
<dbReference type="EMBL" id="BC021137">
    <property type="protein sequence ID" value="AAH21137.2"/>
    <property type="molecule type" value="mRNA"/>
</dbReference>
<dbReference type="EMBL" id="BC032453">
    <property type="protein sequence ID" value="AAH32453.1"/>
    <property type="molecule type" value="mRNA"/>
</dbReference>
<dbReference type="CCDS" id="CCDS33984.1">
    <molecule id="Q8WU76-1"/>
</dbReference>
<dbReference type="RefSeq" id="NP_689753.2">
    <molecule id="Q8WU76-1"/>
    <property type="nucleotide sequence ID" value="NM_152540.3"/>
</dbReference>
<dbReference type="BioGRID" id="127454">
    <property type="interactions" value="48"/>
</dbReference>
<dbReference type="FunCoup" id="Q8WU76">
    <property type="interactions" value="357"/>
</dbReference>
<dbReference type="IntAct" id="Q8WU76">
    <property type="interactions" value="27"/>
</dbReference>
<dbReference type="STRING" id="9606.ENSP00000384182"/>
<dbReference type="GlyGen" id="Q8WU76">
    <property type="glycosylation" value="1 site"/>
</dbReference>
<dbReference type="iPTMnet" id="Q8WU76"/>
<dbReference type="PhosphoSitePlus" id="Q8WU76"/>
<dbReference type="SwissPalm" id="Q8WU76"/>
<dbReference type="BioMuta" id="SCFD2"/>
<dbReference type="DMDM" id="51338675"/>
<dbReference type="jPOST" id="Q8WU76"/>
<dbReference type="MassIVE" id="Q8WU76"/>
<dbReference type="PaxDb" id="9606-ENSP00000384182"/>
<dbReference type="PeptideAtlas" id="Q8WU76"/>
<dbReference type="ProteomicsDB" id="74640">
    <molecule id="Q8WU76-1"/>
</dbReference>
<dbReference type="ProteomicsDB" id="74641">
    <molecule id="Q8WU76-2"/>
</dbReference>
<dbReference type="Pumba" id="Q8WU76"/>
<dbReference type="Antibodypedia" id="23902">
    <property type="antibodies" value="74 antibodies from 20 providers"/>
</dbReference>
<dbReference type="DNASU" id="152579"/>
<dbReference type="Ensembl" id="ENST00000388940.8">
    <molecule id="Q8WU76-2"/>
    <property type="protein sequence ID" value="ENSP00000373592.4"/>
    <property type="gene ID" value="ENSG00000184178.17"/>
</dbReference>
<dbReference type="Ensembl" id="ENST00000401642.8">
    <molecule id="Q8WU76-1"/>
    <property type="protein sequence ID" value="ENSP00000384182.3"/>
    <property type="gene ID" value="ENSG00000184178.17"/>
</dbReference>
<dbReference type="GeneID" id="152579"/>
<dbReference type="KEGG" id="hsa:152579"/>
<dbReference type="MANE-Select" id="ENST00000401642.8">
    <property type="protein sequence ID" value="ENSP00000384182.3"/>
    <property type="RefSeq nucleotide sequence ID" value="NM_152540.4"/>
    <property type="RefSeq protein sequence ID" value="NP_689753.2"/>
</dbReference>
<dbReference type="UCSC" id="uc003gzu.4">
    <molecule id="Q8WU76-1"/>
    <property type="organism name" value="human"/>
</dbReference>
<dbReference type="AGR" id="HGNC:30676"/>
<dbReference type="CTD" id="152579"/>
<dbReference type="DisGeNET" id="152579"/>
<dbReference type="GeneCards" id="SCFD2"/>
<dbReference type="HGNC" id="HGNC:30676">
    <property type="gene designation" value="SCFD2"/>
</dbReference>
<dbReference type="HPA" id="ENSG00000184178">
    <property type="expression patterns" value="Low tissue specificity"/>
</dbReference>
<dbReference type="neXtProt" id="NX_Q8WU76"/>
<dbReference type="OpenTargets" id="ENSG00000184178"/>
<dbReference type="PharmGKB" id="PA134953686"/>
<dbReference type="VEuPathDB" id="HostDB:ENSG00000184178"/>
<dbReference type="eggNOG" id="ENOG502QQIB">
    <property type="taxonomic scope" value="Eukaryota"/>
</dbReference>
<dbReference type="GeneTree" id="ENSGT00390000011192"/>
<dbReference type="HOGENOM" id="CLU_027230_1_0_1"/>
<dbReference type="InParanoid" id="Q8WU76"/>
<dbReference type="OMA" id="FHEYESL"/>
<dbReference type="OrthoDB" id="549905at2759"/>
<dbReference type="PAN-GO" id="Q8WU76">
    <property type="GO annotations" value="6 GO annotations based on evolutionary models"/>
</dbReference>
<dbReference type="PhylomeDB" id="Q8WU76"/>
<dbReference type="TreeFam" id="TF329842"/>
<dbReference type="PathwayCommons" id="Q8WU76"/>
<dbReference type="SignaLink" id="Q8WU76"/>
<dbReference type="BioGRID-ORCS" id="152579">
    <property type="hits" value="16 hits in 1154 CRISPR screens"/>
</dbReference>
<dbReference type="ChiTaRS" id="SCFD2">
    <property type="organism name" value="human"/>
</dbReference>
<dbReference type="GenomeRNAi" id="152579"/>
<dbReference type="Pharos" id="Q8WU76">
    <property type="development level" value="Tdark"/>
</dbReference>
<dbReference type="PRO" id="PR:Q8WU76"/>
<dbReference type="Proteomes" id="UP000005640">
    <property type="component" value="Chromosome 4"/>
</dbReference>
<dbReference type="RNAct" id="Q8WU76">
    <property type="molecule type" value="protein"/>
</dbReference>
<dbReference type="Bgee" id="ENSG00000184178">
    <property type="expression patterns" value="Expressed in pancreatic ductal cell and 194 other cell types or tissues"/>
</dbReference>
<dbReference type="ExpressionAtlas" id="Q8WU76">
    <property type="expression patterns" value="baseline and differential"/>
</dbReference>
<dbReference type="GO" id="GO:0006886">
    <property type="term" value="P:intracellular protein transport"/>
    <property type="evidence" value="ECO:0000318"/>
    <property type="project" value="GO_Central"/>
</dbReference>
<dbReference type="GO" id="GO:0016192">
    <property type="term" value="P:vesicle-mediated transport"/>
    <property type="evidence" value="ECO:0000318"/>
    <property type="project" value="GO_Central"/>
</dbReference>
<dbReference type="Gene3D" id="1.25.40.60">
    <property type="match status" value="1"/>
</dbReference>
<dbReference type="Gene3D" id="3.40.50.1910">
    <property type="match status" value="1"/>
</dbReference>
<dbReference type="InterPro" id="IPR001619">
    <property type="entry name" value="Sec1-like"/>
</dbReference>
<dbReference type="InterPro" id="IPR027482">
    <property type="entry name" value="Sec1-like_dom2"/>
</dbReference>
<dbReference type="InterPro" id="IPR036045">
    <property type="entry name" value="Sec1-like_sf"/>
</dbReference>
<dbReference type="PANTHER" id="PTHR11679">
    <property type="entry name" value="VESICLE PROTEIN SORTING-ASSOCIATED"/>
    <property type="match status" value="1"/>
</dbReference>
<dbReference type="Pfam" id="PF00995">
    <property type="entry name" value="Sec1"/>
    <property type="match status" value="1"/>
</dbReference>
<dbReference type="SUPFAM" id="SSF56815">
    <property type="entry name" value="Sec1/munc18-like (SM) proteins"/>
    <property type="match status" value="1"/>
</dbReference>
<sequence>MSASGVLSFTQQGWEQVLAKVKRAVVYLDAACAESLHWGCGSTRLLEAVGGPDCHLREFEPDAIGGGAKQPKAVFVLSCLLKGRTVEILRDIICRSHFQYCVVVTTVSHAVHLTANHVPAAAAAEMEGQQPVFEQLEEKLCEWMGNMNYTAEVFHVPLLLAPVAPHFALTPAFASLFPLLPQDVHLLNSARPDKRKLGSLGDVDSTTLTPELLLQIRCLVSGLSSLCEHLGVREECFAVGSLSQVIAADLANYAPAKNRKKTAAGRASVVFVDRTLDLTGAVGHHGDNLVEKIISALPQLPGHTNDVMVNMIALTALHTEEENYNVVAPGCLSQSSDTTAKALWEALLNTKHKEAVMEVRRHLVEAASRENLPIKMSMGRVTPGQLMSYIQLFKNNLKALMNHCGLLQLGLATAQTLKHPQTAKWDNFLAFERLLLQSIGESAMSVVLNQLLPMIKPVTQRTNEDYSPEELLILLIYIYSVTGELTVDKDLCEAEEKVKKALAQVFCEESGLSPLLQKITDWDSSINLTFHKSKIAVDELFTSLRDIAGARSLLKQFKSVYVPGNHTHQASYKPLLKQVVEEIFHPERPDSVDIEHMSSGLTDLLKTGFSMFMKVSRPHPSDYPLLILFVVGGVTVSEVKMVKDLVASLKPGTQVIVLSTRLLKPLNIPELLFATDRLHPDLGF</sequence>
<accession>Q8WU76</accession>
<accession>Q8N5F3</accession>
<accession>Q8N8H0</accession>
<accession>Q96ED3</accession>
<comment type="function">
    <text>May be involved in protein transport.</text>
</comment>
<comment type="alternative products">
    <event type="alternative splicing"/>
    <isoform>
        <id>Q8WU76-1</id>
        <name>1</name>
        <sequence type="displayed"/>
    </isoform>
    <isoform>
        <id>Q8WU76-2</id>
        <name>2</name>
        <sequence type="described" ref="VSP_010710"/>
    </isoform>
</comment>
<comment type="similarity">
    <text evidence="2">Belongs to the STXBP/unc-18/SEC1 family.</text>
</comment>
<keyword id="KW-0025">Alternative splicing</keyword>
<keyword id="KW-0653">Protein transport</keyword>
<keyword id="KW-1267">Proteomics identification</keyword>
<keyword id="KW-1185">Reference proteome</keyword>
<keyword id="KW-0813">Transport</keyword>
<organism>
    <name type="scientific">Homo sapiens</name>
    <name type="common">Human</name>
    <dbReference type="NCBI Taxonomy" id="9606"/>
    <lineage>
        <taxon>Eukaryota</taxon>
        <taxon>Metazoa</taxon>
        <taxon>Chordata</taxon>
        <taxon>Craniata</taxon>
        <taxon>Vertebrata</taxon>
        <taxon>Euteleostomi</taxon>
        <taxon>Mammalia</taxon>
        <taxon>Eutheria</taxon>
        <taxon>Euarchontoglires</taxon>
        <taxon>Primates</taxon>
        <taxon>Haplorrhini</taxon>
        <taxon>Catarrhini</taxon>
        <taxon>Hominidae</taxon>
        <taxon>Homo</taxon>
    </lineage>
</organism>
<feature type="chain" id="PRO_0000206290" description="Sec1 family domain-containing protein 2">
    <location>
        <begin position="1"/>
        <end position="684"/>
    </location>
</feature>
<feature type="splice variant" id="VSP_010710" description="In isoform 2." evidence="1">
    <location>
        <begin position="570"/>
        <end position="614"/>
    </location>
</feature>
<feature type="sequence variant" id="VAR_024687" description="In dbSNP:rs7675987.">
    <original>L</original>
    <variation>S</variation>
    <location>
        <position position="512"/>
    </location>
</feature>
<reference key="1">
    <citation type="submission" date="2003-05" db="EMBL/GenBank/DDBJ databases">
        <title>Expression of a syntaxin binding protein 1-like gene in human neuroblastoma.</title>
        <authorList>
            <person name="Weber A."/>
            <person name="Glaum A."/>
            <person name="Klinkhammer B."/>
            <person name="Bergmann E."/>
            <person name="Berwanger B."/>
            <person name="Eilers M."/>
            <person name="Christiansen H."/>
        </authorList>
    </citation>
    <scope>NUCLEOTIDE SEQUENCE [MRNA] (ISOFORM 1)</scope>
    <source>
        <tissue>Fetal brain</tissue>
    </source>
</reference>
<reference key="2">
    <citation type="journal article" date="2004" name="Nat. Genet.">
        <title>Complete sequencing and characterization of 21,243 full-length human cDNAs.</title>
        <authorList>
            <person name="Ota T."/>
            <person name="Suzuki Y."/>
            <person name="Nishikawa T."/>
            <person name="Otsuki T."/>
            <person name="Sugiyama T."/>
            <person name="Irie R."/>
            <person name="Wakamatsu A."/>
            <person name="Hayashi K."/>
            <person name="Sato H."/>
            <person name="Nagai K."/>
            <person name="Kimura K."/>
            <person name="Makita H."/>
            <person name="Sekine M."/>
            <person name="Obayashi M."/>
            <person name="Nishi T."/>
            <person name="Shibahara T."/>
            <person name="Tanaka T."/>
            <person name="Ishii S."/>
            <person name="Yamamoto J."/>
            <person name="Saito K."/>
            <person name="Kawai Y."/>
            <person name="Isono Y."/>
            <person name="Nakamura Y."/>
            <person name="Nagahari K."/>
            <person name="Murakami K."/>
            <person name="Yasuda T."/>
            <person name="Iwayanagi T."/>
            <person name="Wagatsuma M."/>
            <person name="Shiratori A."/>
            <person name="Sudo H."/>
            <person name="Hosoiri T."/>
            <person name="Kaku Y."/>
            <person name="Kodaira H."/>
            <person name="Kondo H."/>
            <person name="Sugawara M."/>
            <person name="Takahashi M."/>
            <person name="Kanda K."/>
            <person name="Yokoi T."/>
            <person name="Furuya T."/>
            <person name="Kikkawa E."/>
            <person name="Omura Y."/>
            <person name="Abe K."/>
            <person name="Kamihara K."/>
            <person name="Katsuta N."/>
            <person name="Sato K."/>
            <person name="Tanikawa M."/>
            <person name="Yamazaki M."/>
            <person name="Ninomiya K."/>
            <person name="Ishibashi T."/>
            <person name="Yamashita H."/>
            <person name="Murakawa K."/>
            <person name="Fujimori K."/>
            <person name="Tanai H."/>
            <person name="Kimata M."/>
            <person name="Watanabe M."/>
            <person name="Hiraoka S."/>
            <person name="Chiba Y."/>
            <person name="Ishida S."/>
            <person name="Ono Y."/>
            <person name="Takiguchi S."/>
            <person name="Watanabe S."/>
            <person name="Yosida M."/>
            <person name="Hotuta T."/>
            <person name="Kusano J."/>
            <person name="Kanehori K."/>
            <person name="Takahashi-Fujii A."/>
            <person name="Hara H."/>
            <person name="Tanase T.-O."/>
            <person name="Nomura Y."/>
            <person name="Togiya S."/>
            <person name="Komai F."/>
            <person name="Hara R."/>
            <person name="Takeuchi K."/>
            <person name="Arita M."/>
            <person name="Imose N."/>
            <person name="Musashino K."/>
            <person name="Yuuki H."/>
            <person name="Oshima A."/>
            <person name="Sasaki N."/>
            <person name="Aotsuka S."/>
            <person name="Yoshikawa Y."/>
            <person name="Matsunawa H."/>
            <person name="Ichihara T."/>
            <person name="Shiohata N."/>
            <person name="Sano S."/>
            <person name="Moriya S."/>
            <person name="Momiyama H."/>
            <person name="Satoh N."/>
            <person name="Takami S."/>
            <person name="Terashima Y."/>
            <person name="Suzuki O."/>
            <person name="Nakagawa S."/>
            <person name="Senoh A."/>
            <person name="Mizoguchi H."/>
            <person name="Goto Y."/>
            <person name="Shimizu F."/>
            <person name="Wakebe H."/>
            <person name="Hishigaki H."/>
            <person name="Watanabe T."/>
            <person name="Sugiyama A."/>
            <person name="Takemoto M."/>
            <person name="Kawakami B."/>
            <person name="Yamazaki M."/>
            <person name="Watanabe K."/>
            <person name="Kumagai A."/>
            <person name="Itakura S."/>
            <person name="Fukuzumi Y."/>
            <person name="Fujimori Y."/>
            <person name="Komiyama M."/>
            <person name="Tashiro H."/>
            <person name="Tanigami A."/>
            <person name="Fujiwara T."/>
            <person name="Ono T."/>
            <person name="Yamada K."/>
            <person name="Fujii Y."/>
            <person name="Ozaki K."/>
            <person name="Hirao M."/>
            <person name="Ohmori Y."/>
            <person name="Kawabata A."/>
            <person name="Hikiji T."/>
            <person name="Kobatake N."/>
            <person name="Inagaki H."/>
            <person name="Ikema Y."/>
            <person name="Okamoto S."/>
            <person name="Okitani R."/>
            <person name="Kawakami T."/>
            <person name="Noguchi S."/>
            <person name="Itoh T."/>
            <person name="Shigeta K."/>
            <person name="Senba T."/>
            <person name="Matsumura K."/>
            <person name="Nakajima Y."/>
            <person name="Mizuno T."/>
            <person name="Morinaga M."/>
            <person name="Sasaki M."/>
            <person name="Togashi T."/>
            <person name="Oyama M."/>
            <person name="Hata H."/>
            <person name="Watanabe M."/>
            <person name="Komatsu T."/>
            <person name="Mizushima-Sugano J."/>
            <person name="Satoh T."/>
            <person name="Shirai Y."/>
            <person name="Takahashi Y."/>
            <person name="Nakagawa K."/>
            <person name="Okumura K."/>
            <person name="Nagase T."/>
            <person name="Nomura N."/>
            <person name="Kikuchi H."/>
            <person name="Masuho Y."/>
            <person name="Yamashita R."/>
            <person name="Nakai K."/>
            <person name="Yada T."/>
            <person name="Nakamura Y."/>
            <person name="Ohara O."/>
            <person name="Isogai T."/>
            <person name="Sugano S."/>
        </authorList>
    </citation>
    <scope>NUCLEOTIDE SEQUENCE [LARGE SCALE MRNA] (ISOFORM 2)</scope>
    <source>
        <tissue>Endothelial cell</tissue>
    </source>
</reference>
<reference key="3">
    <citation type="journal article" date="2004" name="Genome Res.">
        <title>The status, quality, and expansion of the NIH full-length cDNA project: the Mammalian Gene Collection (MGC).</title>
        <authorList>
            <consortium name="The MGC Project Team"/>
        </authorList>
    </citation>
    <scope>NUCLEOTIDE SEQUENCE [LARGE SCALE MRNA] (ISOFORM 1)</scope>
    <source>
        <tissue>Brain</tissue>
        <tissue>Colon</tissue>
        <tissue>Lung</tissue>
        <tissue>Ovary</tissue>
    </source>
</reference>
<reference key="4">
    <citation type="journal article" date="2008" name="Proc. Natl. Acad. Sci. U.S.A.">
        <title>A quantitative atlas of mitotic phosphorylation.</title>
        <authorList>
            <person name="Dephoure N."/>
            <person name="Zhou C."/>
            <person name="Villen J."/>
            <person name="Beausoleil S.A."/>
            <person name="Bakalarski C.E."/>
            <person name="Elledge S.J."/>
            <person name="Gygi S.P."/>
        </authorList>
    </citation>
    <scope>IDENTIFICATION BY MASS SPECTROMETRY [LARGE SCALE ANALYSIS]</scope>
    <source>
        <tissue>Cervix carcinoma</tissue>
    </source>
</reference>
<reference key="5">
    <citation type="journal article" date="2011" name="BMC Syst. Biol.">
        <title>Initial characterization of the human central proteome.</title>
        <authorList>
            <person name="Burkard T.R."/>
            <person name="Planyavsky M."/>
            <person name="Kaupe I."/>
            <person name="Breitwieser F.P."/>
            <person name="Buerckstuemmer T."/>
            <person name="Bennett K.L."/>
            <person name="Superti-Furga G."/>
            <person name="Colinge J."/>
        </authorList>
    </citation>
    <scope>IDENTIFICATION BY MASS SPECTROMETRY [LARGE SCALE ANALYSIS]</scope>
</reference>
<protein>
    <recommendedName>
        <fullName>Sec1 family domain-containing protein 2</fullName>
    </recommendedName>
    <alternativeName>
        <fullName>Syntaxin-binding protein 1-like 1</fullName>
    </alternativeName>
</protein>
<evidence type="ECO:0000303" key="1">
    <source>
    </source>
</evidence>
<evidence type="ECO:0000305" key="2"/>
<name>SCFD2_HUMAN</name>
<gene>
    <name type="primary">SCFD2</name>
    <name type="synonym">STXBP1L1</name>
</gene>